<proteinExistence type="evidence at transcript level"/>
<reference key="1">
    <citation type="journal article" date="2002" name="Nature">
        <title>The genome sequence of Schizosaccharomyces pombe.</title>
        <authorList>
            <person name="Wood V."/>
            <person name="Gwilliam R."/>
            <person name="Rajandream M.A."/>
            <person name="Lyne M.H."/>
            <person name="Lyne R."/>
            <person name="Stewart A."/>
            <person name="Sgouros J.G."/>
            <person name="Peat N."/>
            <person name="Hayles J."/>
            <person name="Baker S.G."/>
            <person name="Basham D."/>
            <person name="Bowman S."/>
            <person name="Brooks K."/>
            <person name="Brown D."/>
            <person name="Brown S."/>
            <person name="Chillingworth T."/>
            <person name="Churcher C.M."/>
            <person name="Collins M."/>
            <person name="Connor R."/>
            <person name="Cronin A."/>
            <person name="Davis P."/>
            <person name="Feltwell T."/>
            <person name="Fraser A."/>
            <person name="Gentles S."/>
            <person name="Goble A."/>
            <person name="Hamlin N."/>
            <person name="Harris D.E."/>
            <person name="Hidalgo J."/>
            <person name="Hodgson G."/>
            <person name="Holroyd S."/>
            <person name="Hornsby T."/>
            <person name="Howarth S."/>
            <person name="Huckle E.J."/>
            <person name="Hunt S."/>
            <person name="Jagels K."/>
            <person name="James K.D."/>
            <person name="Jones L."/>
            <person name="Jones M."/>
            <person name="Leather S."/>
            <person name="McDonald S."/>
            <person name="McLean J."/>
            <person name="Mooney P."/>
            <person name="Moule S."/>
            <person name="Mungall K.L."/>
            <person name="Murphy L.D."/>
            <person name="Niblett D."/>
            <person name="Odell C."/>
            <person name="Oliver K."/>
            <person name="O'Neil S."/>
            <person name="Pearson D."/>
            <person name="Quail M.A."/>
            <person name="Rabbinowitsch E."/>
            <person name="Rutherford K.M."/>
            <person name="Rutter S."/>
            <person name="Saunders D."/>
            <person name="Seeger K."/>
            <person name="Sharp S."/>
            <person name="Skelton J."/>
            <person name="Simmonds M.N."/>
            <person name="Squares R."/>
            <person name="Squares S."/>
            <person name="Stevens K."/>
            <person name="Taylor K."/>
            <person name="Taylor R.G."/>
            <person name="Tivey A."/>
            <person name="Walsh S.V."/>
            <person name="Warren T."/>
            <person name="Whitehead S."/>
            <person name="Woodward J.R."/>
            <person name="Volckaert G."/>
            <person name="Aert R."/>
            <person name="Robben J."/>
            <person name="Grymonprez B."/>
            <person name="Weltjens I."/>
            <person name="Vanstreels E."/>
            <person name="Rieger M."/>
            <person name="Schaefer M."/>
            <person name="Mueller-Auer S."/>
            <person name="Gabel C."/>
            <person name="Fuchs M."/>
            <person name="Duesterhoeft A."/>
            <person name="Fritzc C."/>
            <person name="Holzer E."/>
            <person name="Moestl D."/>
            <person name="Hilbert H."/>
            <person name="Borzym K."/>
            <person name="Langer I."/>
            <person name="Beck A."/>
            <person name="Lehrach H."/>
            <person name="Reinhardt R."/>
            <person name="Pohl T.M."/>
            <person name="Eger P."/>
            <person name="Zimmermann W."/>
            <person name="Wedler H."/>
            <person name="Wambutt R."/>
            <person name="Purnelle B."/>
            <person name="Goffeau A."/>
            <person name="Cadieu E."/>
            <person name="Dreano S."/>
            <person name="Gloux S."/>
            <person name="Lelaure V."/>
            <person name="Mottier S."/>
            <person name="Galibert F."/>
            <person name="Aves S.J."/>
            <person name="Xiang Z."/>
            <person name="Hunt C."/>
            <person name="Moore K."/>
            <person name="Hurst S.M."/>
            <person name="Lucas M."/>
            <person name="Rochet M."/>
            <person name="Gaillardin C."/>
            <person name="Tallada V.A."/>
            <person name="Garzon A."/>
            <person name="Thode G."/>
            <person name="Daga R.R."/>
            <person name="Cruzado L."/>
            <person name="Jimenez J."/>
            <person name="Sanchez M."/>
            <person name="del Rey F."/>
            <person name="Benito J."/>
            <person name="Dominguez A."/>
            <person name="Revuelta J.L."/>
            <person name="Moreno S."/>
            <person name="Armstrong J."/>
            <person name="Forsburg S.L."/>
            <person name="Cerutti L."/>
            <person name="Lowe T."/>
            <person name="McCombie W.R."/>
            <person name="Paulsen I."/>
            <person name="Potashkin J."/>
            <person name="Shpakovski G.V."/>
            <person name="Ussery D."/>
            <person name="Barrell B.G."/>
            <person name="Nurse P."/>
        </authorList>
    </citation>
    <scope>NUCLEOTIDE SEQUENCE [LARGE SCALE GENOMIC DNA]</scope>
    <source>
        <strain>972 / ATCC 24843</strain>
    </source>
</reference>
<reference key="2">
    <citation type="journal article" date="1997" name="DNA Res.">
        <title>Identification of open reading frames in Schizosaccharomyces pombe cDNAs.</title>
        <authorList>
            <person name="Yoshioka S."/>
            <person name="Kato K."/>
            <person name="Nakai K."/>
            <person name="Okayama H."/>
            <person name="Nojima H."/>
        </authorList>
    </citation>
    <scope>NUCLEOTIDE SEQUENCE [LARGE SCALE MRNA] OF 225-588</scope>
    <source>
        <strain>PR745</strain>
    </source>
</reference>
<organism>
    <name type="scientific">Schizosaccharomyces pombe (strain 972 / ATCC 24843)</name>
    <name type="common">Fission yeast</name>
    <dbReference type="NCBI Taxonomy" id="284812"/>
    <lineage>
        <taxon>Eukaryota</taxon>
        <taxon>Fungi</taxon>
        <taxon>Dikarya</taxon>
        <taxon>Ascomycota</taxon>
        <taxon>Taphrinomycotina</taxon>
        <taxon>Schizosaccharomycetes</taxon>
        <taxon>Schizosaccharomycetales</taxon>
        <taxon>Schizosaccharomycetaceae</taxon>
        <taxon>Schizosaccharomyces</taxon>
    </lineage>
</organism>
<name>YDYE_SCHPO</name>
<comment type="sequence caution" evidence="1">
    <conflict type="frameshift">
        <sequence resource="EMBL-CDS" id="BAA13875"/>
    </conflict>
</comment>
<dbReference type="EMBL" id="CU329670">
    <property type="protein sequence ID" value="CAB11193.1"/>
    <property type="molecule type" value="Genomic_DNA"/>
</dbReference>
<dbReference type="EMBL" id="D89214">
    <property type="protein sequence ID" value="BAA13875.1"/>
    <property type="status" value="ALT_FRAME"/>
    <property type="molecule type" value="mRNA"/>
</dbReference>
<dbReference type="PIR" id="T37542">
    <property type="entry name" value="T37542"/>
</dbReference>
<dbReference type="PIR" id="T43035">
    <property type="entry name" value="T43035"/>
</dbReference>
<dbReference type="RefSeq" id="NP_594939.1">
    <property type="nucleotide sequence ID" value="NM_001020370.2"/>
</dbReference>
<dbReference type="SMR" id="O13693"/>
<dbReference type="BioGRID" id="279435">
    <property type="interactions" value="3"/>
</dbReference>
<dbReference type="FunCoup" id="O13693">
    <property type="interactions" value="78"/>
</dbReference>
<dbReference type="iPTMnet" id="O13693"/>
<dbReference type="PaxDb" id="4896-SPAC11E3.14.1"/>
<dbReference type="EnsemblFungi" id="SPAC11E3.14.1">
    <property type="protein sequence ID" value="SPAC11E3.14.1:pep"/>
    <property type="gene ID" value="SPAC11E3.14"/>
</dbReference>
<dbReference type="KEGG" id="spo:2542997"/>
<dbReference type="PomBase" id="SPAC11E3.14"/>
<dbReference type="VEuPathDB" id="FungiDB:SPAC11E3.14"/>
<dbReference type="eggNOG" id="KOG3783">
    <property type="taxonomic scope" value="Eukaryota"/>
</dbReference>
<dbReference type="HOGENOM" id="CLU_464729_0_0_1"/>
<dbReference type="InParanoid" id="O13693"/>
<dbReference type="OMA" id="MENDEND"/>
<dbReference type="PhylomeDB" id="O13693"/>
<dbReference type="PRO" id="PR:O13693"/>
<dbReference type="Proteomes" id="UP000002485">
    <property type="component" value="Chromosome I"/>
</dbReference>
<dbReference type="GO" id="GO:0005829">
    <property type="term" value="C:cytosol"/>
    <property type="evidence" value="ECO:0007005"/>
    <property type="project" value="PomBase"/>
</dbReference>
<dbReference type="GO" id="GO:0005634">
    <property type="term" value="C:nucleus"/>
    <property type="evidence" value="ECO:0007005"/>
    <property type="project" value="PomBase"/>
</dbReference>
<dbReference type="GO" id="GO:1990748">
    <property type="term" value="P:cellular detoxification"/>
    <property type="evidence" value="ECO:0000303"/>
    <property type="project" value="PomBase"/>
</dbReference>
<dbReference type="GO" id="GO:0071218">
    <property type="term" value="P:cellular response to misfolded protein"/>
    <property type="evidence" value="ECO:0000266"/>
    <property type="project" value="PomBase"/>
</dbReference>
<dbReference type="InterPro" id="IPR019412">
    <property type="entry name" value="Iml2/TPR_39"/>
</dbReference>
<dbReference type="PANTHER" id="PTHR31859">
    <property type="entry name" value="TETRATRICOPEPTIDE REPEAT PROTEIN 39 FAMILY MEMBER"/>
    <property type="match status" value="1"/>
</dbReference>
<dbReference type="PANTHER" id="PTHR31859:SF1">
    <property type="entry name" value="TETRATRICOPEPTIDE REPEAT PROTEIN 39C"/>
    <property type="match status" value="1"/>
</dbReference>
<dbReference type="Pfam" id="PF10300">
    <property type="entry name" value="Iml2-TPR_39"/>
    <property type="match status" value="1"/>
</dbReference>
<protein>
    <recommendedName>
        <fullName>Uncharacterized protein C11E3.14</fullName>
    </recommendedName>
</protein>
<accession>O13693</accession>
<accession>P78864</accession>
<evidence type="ECO:0000305" key="1"/>
<sequence length="588" mass="67091">MFNIKNHLRLPIIGKREPEEQPDPIDHDLHVQRLRELLYGLDLMLDDDAQGVKSAFSDDTVESAVGRSGSAFYNAILGLEPKAIEEATEALYHAEQVTEERKKHFEHHDRPIGSYPAGMELQLCLSDIYLMQSALGFVSDSIVDSMKAAYRIRKTFLSFSKMMEHVRDVQHKKETGEIKSLSPNATFIDEFIESGVITGYGVLTFLVSMFPPSLSRILSLFSFHGVRKESLELLWRASKYPNIQGAIALLCLYAFNAMIQSLGSIPPSNYDQELEHCLQAVKDIRKRYSKGALWAVMEAKIYFLTGESQMALEMEELSIDSSMEQIIAMKGFDTAMLYVGMRKFKQAADAIIELEDLNSWSHAFYRYFAGCCLLQHGKEILGSGGSEEEAKASIDHGIEYLKNAPTLVQKKKKRRTLPVEAYLIRKVQKWEDRAEKLNISIADAMDVPPYAELIYIFVICSLKDPKEAEALRADLETCKCSEEDEAGLKEFLLGVIDRHLKEYDSCRVRMEHVLQLDQGYLSRDNRELWILPFAYYELAALYWDMHGMAAEKEVNHYLKKAQEFNDYDLQNRLSMLAQAATQTLQSEK</sequence>
<gene>
    <name type="ORF">SPAC11E3.14</name>
</gene>
<feature type="chain" id="PRO_0000116679" description="Uncharacterized protein C11E3.14">
    <location>
        <begin position="1"/>
        <end position="588"/>
    </location>
</feature>
<feature type="sequence conflict" description="In Ref. 2; BAA13875." evidence="1" ref="2">
    <original>L</original>
    <variation>M</variation>
    <location>
        <position position="516"/>
    </location>
</feature>
<feature type="sequence conflict" description="In Ref. 2; BAA13875." evidence="1" ref="2">
    <original>A</original>
    <variation>V</variation>
    <location>
        <position position="534"/>
    </location>
</feature>
<keyword id="KW-1185">Reference proteome</keyword>